<evidence type="ECO:0000255" key="1">
    <source>
        <dbReference type="HAMAP-Rule" id="MF_00921"/>
    </source>
</evidence>
<sequence>MEKIKIIVASDSIGETAELVARAGISQFNPKQCKNELLRYPYIESFEDVDEVIQVAKDTNAIIVYTLIKPEMKQYMSEKVAEFQLKSVDIMGPLMDLLSASVEEKPYNEPGIVHRLDDAYFKKIDAIEFAVKYDDGKDPKGLPKADIVLLGISRTSKTPLSQYLAHKSYKVMNVPIVPEVTPPDGLYDINPKKCIALKISEEKLNRIRKERLKQLGLGDTARYATEARIQEELNYFEEIVSEIGCPVIDVSQKAIEETANDIIHYIEQNKSK</sequence>
<name>PDRP_STAA3</name>
<reference key="1">
    <citation type="journal article" date="2006" name="Lancet">
        <title>Complete genome sequence of USA300, an epidemic clone of community-acquired meticillin-resistant Staphylococcus aureus.</title>
        <authorList>
            <person name="Diep B.A."/>
            <person name="Gill S.R."/>
            <person name="Chang R.F."/>
            <person name="Phan T.H."/>
            <person name="Chen J.H."/>
            <person name="Davidson M.G."/>
            <person name="Lin F."/>
            <person name="Lin J."/>
            <person name="Carleton H.A."/>
            <person name="Mongodin E.F."/>
            <person name="Sensabaugh G.F."/>
            <person name="Perdreau-Remington F."/>
        </authorList>
    </citation>
    <scope>NUCLEOTIDE SEQUENCE [LARGE SCALE GENOMIC DNA]</scope>
    <source>
        <strain>USA300</strain>
    </source>
</reference>
<protein>
    <recommendedName>
        <fullName evidence="1">Putative pyruvate, phosphate dikinase regulatory protein</fullName>
        <shortName evidence="1">PPDK regulatory protein</shortName>
        <ecNumber evidence="1">2.7.11.32</ecNumber>
        <ecNumber evidence="1">2.7.4.27</ecNumber>
    </recommendedName>
</protein>
<dbReference type="EC" id="2.7.11.32" evidence="1"/>
<dbReference type="EC" id="2.7.4.27" evidence="1"/>
<dbReference type="EMBL" id="CP000255">
    <property type="protein sequence ID" value="ABD21965.1"/>
    <property type="molecule type" value="Genomic_DNA"/>
</dbReference>
<dbReference type="RefSeq" id="WP_000411299.1">
    <property type="nucleotide sequence ID" value="NZ_CP027476.1"/>
</dbReference>
<dbReference type="SMR" id="Q2FGG0"/>
<dbReference type="KEGG" id="saa:SAUSA300_1523"/>
<dbReference type="HOGENOM" id="CLU_046206_2_1_9"/>
<dbReference type="OMA" id="YAQCEFE"/>
<dbReference type="Proteomes" id="UP000001939">
    <property type="component" value="Chromosome"/>
</dbReference>
<dbReference type="GO" id="GO:0043531">
    <property type="term" value="F:ADP binding"/>
    <property type="evidence" value="ECO:0007669"/>
    <property type="project" value="UniProtKB-UniRule"/>
</dbReference>
<dbReference type="GO" id="GO:0005524">
    <property type="term" value="F:ATP binding"/>
    <property type="evidence" value="ECO:0007669"/>
    <property type="project" value="InterPro"/>
</dbReference>
<dbReference type="GO" id="GO:0016776">
    <property type="term" value="F:phosphotransferase activity, phosphate group as acceptor"/>
    <property type="evidence" value="ECO:0007669"/>
    <property type="project" value="UniProtKB-UniRule"/>
</dbReference>
<dbReference type="GO" id="GO:0004674">
    <property type="term" value="F:protein serine/threonine kinase activity"/>
    <property type="evidence" value="ECO:0007669"/>
    <property type="project" value="UniProtKB-UniRule"/>
</dbReference>
<dbReference type="HAMAP" id="MF_00921">
    <property type="entry name" value="PDRP"/>
    <property type="match status" value="1"/>
</dbReference>
<dbReference type="InterPro" id="IPR005177">
    <property type="entry name" value="Kinase-pyrophosphorylase"/>
</dbReference>
<dbReference type="InterPro" id="IPR026565">
    <property type="entry name" value="PPDK_reg"/>
</dbReference>
<dbReference type="NCBIfam" id="NF003742">
    <property type="entry name" value="PRK05339.1"/>
    <property type="match status" value="1"/>
</dbReference>
<dbReference type="PANTHER" id="PTHR31756">
    <property type="entry name" value="PYRUVATE, PHOSPHATE DIKINASE REGULATORY PROTEIN 1, CHLOROPLASTIC"/>
    <property type="match status" value="1"/>
</dbReference>
<dbReference type="PANTHER" id="PTHR31756:SF3">
    <property type="entry name" value="PYRUVATE, PHOSPHATE DIKINASE REGULATORY PROTEIN 1, CHLOROPLASTIC"/>
    <property type="match status" value="1"/>
</dbReference>
<dbReference type="Pfam" id="PF03618">
    <property type="entry name" value="Kinase-PPPase"/>
    <property type="match status" value="1"/>
</dbReference>
<gene>
    <name type="ordered locus">SAUSA300_1523</name>
</gene>
<comment type="function">
    <text evidence="1">Bifunctional serine/threonine kinase and phosphorylase involved in the regulation of the pyruvate, phosphate dikinase (PPDK) by catalyzing its phosphorylation/dephosphorylation.</text>
</comment>
<comment type="catalytic activity">
    <reaction evidence="1">
        <text>N(tele)-phospho-L-histidyl/L-threonyl-[pyruvate, phosphate dikinase] + ADP = N(tele)-phospho-L-histidyl/O-phospho-L-threonyl-[pyruvate, phosphate dikinase] + AMP + H(+)</text>
        <dbReference type="Rhea" id="RHEA:43692"/>
        <dbReference type="Rhea" id="RHEA-COMP:10650"/>
        <dbReference type="Rhea" id="RHEA-COMP:10651"/>
        <dbReference type="ChEBI" id="CHEBI:15378"/>
        <dbReference type="ChEBI" id="CHEBI:30013"/>
        <dbReference type="ChEBI" id="CHEBI:61977"/>
        <dbReference type="ChEBI" id="CHEBI:83586"/>
        <dbReference type="ChEBI" id="CHEBI:456215"/>
        <dbReference type="ChEBI" id="CHEBI:456216"/>
        <dbReference type="EC" id="2.7.11.32"/>
    </reaction>
</comment>
<comment type="catalytic activity">
    <reaction evidence="1">
        <text>N(tele)-phospho-L-histidyl/O-phospho-L-threonyl-[pyruvate, phosphate dikinase] + phosphate + H(+) = N(tele)-phospho-L-histidyl/L-threonyl-[pyruvate, phosphate dikinase] + diphosphate</text>
        <dbReference type="Rhea" id="RHEA:43696"/>
        <dbReference type="Rhea" id="RHEA-COMP:10650"/>
        <dbReference type="Rhea" id="RHEA-COMP:10651"/>
        <dbReference type="ChEBI" id="CHEBI:15378"/>
        <dbReference type="ChEBI" id="CHEBI:30013"/>
        <dbReference type="ChEBI" id="CHEBI:33019"/>
        <dbReference type="ChEBI" id="CHEBI:43474"/>
        <dbReference type="ChEBI" id="CHEBI:61977"/>
        <dbReference type="ChEBI" id="CHEBI:83586"/>
        <dbReference type="EC" id="2.7.4.27"/>
    </reaction>
</comment>
<comment type="similarity">
    <text evidence="1">Belongs to the pyruvate, phosphate/water dikinase regulatory protein family. PDRP subfamily.</text>
</comment>
<accession>Q2FGG0</accession>
<feature type="chain" id="PRO_0000316750" description="Putative pyruvate, phosphate dikinase regulatory protein">
    <location>
        <begin position="1"/>
        <end position="272"/>
    </location>
</feature>
<feature type="binding site" evidence="1">
    <location>
        <begin position="151"/>
        <end position="158"/>
    </location>
    <ligand>
        <name>ADP</name>
        <dbReference type="ChEBI" id="CHEBI:456216"/>
    </ligand>
</feature>
<proteinExistence type="inferred from homology"/>
<organism>
    <name type="scientific">Staphylococcus aureus (strain USA300)</name>
    <dbReference type="NCBI Taxonomy" id="367830"/>
    <lineage>
        <taxon>Bacteria</taxon>
        <taxon>Bacillati</taxon>
        <taxon>Bacillota</taxon>
        <taxon>Bacilli</taxon>
        <taxon>Bacillales</taxon>
        <taxon>Staphylococcaceae</taxon>
        <taxon>Staphylococcus</taxon>
    </lineage>
</organism>
<keyword id="KW-0418">Kinase</keyword>
<keyword id="KW-0547">Nucleotide-binding</keyword>
<keyword id="KW-0723">Serine/threonine-protein kinase</keyword>
<keyword id="KW-0808">Transferase</keyword>